<accession>B6ELD1</accession>
<proteinExistence type="inferred from homology"/>
<protein>
    <recommendedName>
        <fullName evidence="1">Dihydroorotate dehydrogenase (quinone)</fullName>
        <ecNumber evidence="1">1.3.5.2</ecNumber>
    </recommendedName>
    <alternativeName>
        <fullName evidence="1">DHOdehase</fullName>
        <shortName evidence="1">DHOD</shortName>
        <shortName evidence="1">DHODase</shortName>
    </alternativeName>
    <alternativeName>
        <fullName evidence="1">Dihydroorotate oxidase</fullName>
    </alternativeName>
</protein>
<gene>
    <name evidence="1" type="primary">pyrD</name>
    <name type="ordered locus">VSAL_I1549</name>
</gene>
<evidence type="ECO:0000255" key="1">
    <source>
        <dbReference type="HAMAP-Rule" id="MF_00225"/>
    </source>
</evidence>
<name>PYRD_ALISL</name>
<dbReference type="EC" id="1.3.5.2" evidence="1"/>
<dbReference type="EMBL" id="FM178379">
    <property type="protein sequence ID" value="CAQ79234.1"/>
    <property type="molecule type" value="Genomic_DNA"/>
</dbReference>
<dbReference type="RefSeq" id="WP_012550199.1">
    <property type="nucleotide sequence ID" value="NC_011312.1"/>
</dbReference>
<dbReference type="SMR" id="B6ELD1"/>
<dbReference type="KEGG" id="vsa:VSAL_I1549"/>
<dbReference type="eggNOG" id="COG0167">
    <property type="taxonomic scope" value="Bacteria"/>
</dbReference>
<dbReference type="HOGENOM" id="CLU_013640_2_0_6"/>
<dbReference type="UniPathway" id="UPA00070">
    <property type="reaction ID" value="UER00946"/>
</dbReference>
<dbReference type="Proteomes" id="UP000001730">
    <property type="component" value="Chromosome 1"/>
</dbReference>
<dbReference type="GO" id="GO:0005737">
    <property type="term" value="C:cytoplasm"/>
    <property type="evidence" value="ECO:0007669"/>
    <property type="project" value="InterPro"/>
</dbReference>
<dbReference type="GO" id="GO:0005886">
    <property type="term" value="C:plasma membrane"/>
    <property type="evidence" value="ECO:0007669"/>
    <property type="project" value="UniProtKB-SubCell"/>
</dbReference>
<dbReference type="GO" id="GO:0106430">
    <property type="term" value="F:dihydroorotate dehydrogenase (quinone) activity"/>
    <property type="evidence" value="ECO:0007669"/>
    <property type="project" value="UniProtKB-EC"/>
</dbReference>
<dbReference type="GO" id="GO:0006207">
    <property type="term" value="P:'de novo' pyrimidine nucleobase biosynthetic process"/>
    <property type="evidence" value="ECO:0007669"/>
    <property type="project" value="InterPro"/>
</dbReference>
<dbReference type="GO" id="GO:0044205">
    <property type="term" value="P:'de novo' UMP biosynthetic process"/>
    <property type="evidence" value="ECO:0007669"/>
    <property type="project" value="UniProtKB-UniRule"/>
</dbReference>
<dbReference type="CDD" id="cd04738">
    <property type="entry name" value="DHOD_2_like"/>
    <property type="match status" value="1"/>
</dbReference>
<dbReference type="FunFam" id="3.20.20.70:FF:000028">
    <property type="entry name" value="Dihydroorotate dehydrogenase (quinone)"/>
    <property type="match status" value="1"/>
</dbReference>
<dbReference type="Gene3D" id="3.20.20.70">
    <property type="entry name" value="Aldolase class I"/>
    <property type="match status" value="1"/>
</dbReference>
<dbReference type="HAMAP" id="MF_00225">
    <property type="entry name" value="DHO_dh_type2"/>
    <property type="match status" value="1"/>
</dbReference>
<dbReference type="InterPro" id="IPR013785">
    <property type="entry name" value="Aldolase_TIM"/>
</dbReference>
<dbReference type="InterPro" id="IPR050074">
    <property type="entry name" value="DHO_dehydrogenase"/>
</dbReference>
<dbReference type="InterPro" id="IPR012135">
    <property type="entry name" value="Dihydroorotate_DH_1_2"/>
</dbReference>
<dbReference type="InterPro" id="IPR005719">
    <property type="entry name" value="Dihydroorotate_DH_2"/>
</dbReference>
<dbReference type="InterPro" id="IPR005720">
    <property type="entry name" value="Dihydroorotate_DH_cat"/>
</dbReference>
<dbReference type="InterPro" id="IPR001295">
    <property type="entry name" value="Dihydroorotate_DH_CS"/>
</dbReference>
<dbReference type="NCBIfam" id="NF003644">
    <property type="entry name" value="PRK05286.1-1"/>
    <property type="match status" value="1"/>
</dbReference>
<dbReference type="NCBIfam" id="NF003645">
    <property type="entry name" value="PRK05286.1-2"/>
    <property type="match status" value="1"/>
</dbReference>
<dbReference type="NCBIfam" id="NF003646">
    <property type="entry name" value="PRK05286.1-4"/>
    <property type="match status" value="1"/>
</dbReference>
<dbReference type="NCBIfam" id="NF003652">
    <property type="entry name" value="PRK05286.2-5"/>
    <property type="match status" value="1"/>
</dbReference>
<dbReference type="NCBIfam" id="TIGR01036">
    <property type="entry name" value="pyrD_sub2"/>
    <property type="match status" value="1"/>
</dbReference>
<dbReference type="PANTHER" id="PTHR48109:SF4">
    <property type="entry name" value="DIHYDROOROTATE DEHYDROGENASE (QUINONE), MITOCHONDRIAL"/>
    <property type="match status" value="1"/>
</dbReference>
<dbReference type="PANTHER" id="PTHR48109">
    <property type="entry name" value="DIHYDROOROTATE DEHYDROGENASE (QUINONE), MITOCHONDRIAL-RELATED"/>
    <property type="match status" value="1"/>
</dbReference>
<dbReference type="Pfam" id="PF01180">
    <property type="entry name" value="DHO_dh"/>
    <property type="match status" value="1"/>
</dbReference>
<dbReference type="PIRSF" id="PIRSF000164">
    <property type="entry name" value="DHO_oxidase"/>
    <property type="match status" value="1"/>
</dbReference>
<dbReference type="SUPFAM" id="SSF51395">
    <property type="entry name" value="FMN-linked oxidoreductases"/>
    <property type="match status" value="1"/>
</dbReference>
<dbReference type="PROSITE" id="PS00911">
    <property type="entry name" value="DHODEHASE_1"/>
    <property type="match status" value="1"/>
</dbReference>
<dbReference type="PROSITE" id="PS00912">
    <property type="entry name" value="DHODEHASE_2"/>
    <property type="match status" value="1"/>
</dbReference>
<reference key="1">
    <citation type="journal article" date="2008" name="BMC Genomics">
        <title>The genome sequence of the fish pathogen Aliivibrio salmonicida strain LFI1238 shows extensive evidence of gene decay.</title>
        <authorList>
            <person name="Hjerde E."/>
            <person name="Lorentzen M.S."/>
            <person name="Holden M.T."/>
            <person name="Seeger K."/>
            <person name="Paulsen S."/>
            <person name="Bason N."/>
            <person name="Churcher C."/>
            <person name="Harris D."/>
            <person name="Norbertczak H."/>
            <person name="Quail M.A."/>
            <person name="Sanders S."/>
            <person name="Thurston S."/>
            <person name="Parkhill J."/>
            <person name="Willassen N.P."/>
            <person name="Thomson N.R."/>
        </authorList>
    </citation>
    <scope>NUCLEOTIDE SEQUENCE [LARGE SCALE GENOMIC DNA]</scope>
    <source>
        <strain>LFI1238</strain>
    </source>
</reference>
<sequence length="336" mass="37026">MLYRIARAGIFKLDAEKAHDLAIQNFKRFNGTPLDIFYRQKLVSKPVEVMGIQFKNPIGLAAGLEKNGECIEAFGAMGFGFIEVGTVTPRPQAGNDKPRLFRLIEAEGIINRMGFNNLGVDNLVENVKKAKYDGVIGINIGKNKDTPIEKGTEDYLICMEKVYQYAGYIAINISSPNTPGLRTLQYGEALDDLLSQLKEKQKELAEKYGKYVPIALKIAPDLDDNELSQIADSLMKYKIDGVIATNTTLDRSMVEGMKHAEEMGGLSGRPIQTRSTEVVRRLKELLGDSLPIIGVGGVDSYVAAKEKMVAGADLVQVYSGFIYKGPNLIRDIVNNI</sequence>
<feature type="chain" id="PRO_1000100246" description="Dihydroorotate dehydrogenase (quinone)">
    <location>
        <begin position="1"/>
        <end position="336"/>
    </location>
</feature>
<feature type="active site" description="Nucleophile" evidence="1">
    <location>
        <position position="175"/>
    </location>
</feature>
<feature type="binding site" evidence="1">
    <location>
        <begin position="62"/>
        <end position="66"/>
    </location>
    <ligand>
        <name>FMN</name>
        <dbReference type="ChEBI" id="CHEBI:58210"/>
    </ligand>
</feature>
<feature type="binding site" evidence="1">
    <location>
        <position position="66"/>
    </location>
    <ligand>
        <name>substrate</name>
    </ligand>
</feature>
<feature type="binding site" evidence="1">
    <location>
        <position position="86"/>
    </location>
    <ligand>
        <name>FMN</name>
        <dbReference type="ChEBI" id="CHEBI:58210"/>
    </ligand>
</feature>
<feature type="binding site" evidence="1">
    <location>
        <begin position="111"/>
        <end position="115"/>
    </location>
    <ligand>
        <name>substrate</name>
    </ligand>
</feature>
<feature type="binding site" evidence="1">
    <location>
        <position position="139"/>
    </location>
    <ligand>
        <name>FMN</name>
        <dbReference type="ChEBI" id="CHEBI:58210"/>
    </ligand>
</feature>
<feature type="binding site" evidence="1">
    <location>
        <position position="172"/>
    </location>
    <ligand>
        <name>FMN</name>
        <dbReference type="ChEBI" id="CHEBI:58210"/>
    </ligand>
</feature>
<feature type="binding site" evidence="1">
    <location>
        <position position="172"/>
    </location>
    <ligand>
        <name>substrate</name>
    </ligand>
</feature>
<feature type="binding site" evidence="1">
    <location>
        <position position="177"/>
    </location>
    <ligand>
        <name>substrate</name>
    </ligand>
</feature>
<feature type="binding site" evidence="1">
    <location>
        <position position="217"/>
    </location>
    <ligand>
        <name>FMN</name>
        <dbReference type="ChEBI" id="CHEBI:58210"/>
    </ligand>
</feature>
<feature type="binding site" evidence="1">
    <location>
        <position position="245"/>
    </location>
    <ligand>
        <name>FMN</name>
        <dbReference type="ChEBI" id="CHEBI:58210"/>
    </ligand>
</feature>
<feature type="binding site" evidence="1">
    <location>
        <begin position="246"/>
        <end position="247"/>
    </location>
    <ligand>
        <name>substrate</name>
    </ligand>
</feature>
<feature type="binding site" evidence="1">
    <location>
        <position position="268"/>
    </location>
    <ligand>
        <name>FMN</name>
        <dbReference type="ChEBI" id="CHEBI:58210"/>
    </ligand>
</feature>
<feature type="binding site" evidence="1">
    <location>
        <position position="297"/>
    </location>
    <ligand>
        <name>FMN</name>
        <dbReference type="ChEBI" id="CHEBI:58210"/>
    </ligand>
</feature>
<feature type="binding site" evidence="1">
    <location>
        <begin position="318"/>
        <end position="319"/>
    </location>
    <ligand>
        <name>FMN</name>
        <dbReference type="ChEBI" id="CHEBI:58210"/>
    </ligand>
</feature>
<comment type="function">
    <text evidence="1">Catalyzes the conversion of dihydroorotate to orotate with quinone as electron acceptor.</text>
</comment>
<comment type="catalytic activity">
    <reaction evidence="1">
        <text>(S)-dihydroorotate + a quinone = orotate + a quinol</text>
        <dbReference type="Rhea" id="RHEA:30187"/>
        <dbReference type="ChEBI" id="CHEBI:24646"/>
        <dbReference type="ChEBI" id="CHEBI:30839"/>
        <dbReference type="ChEBI" id="CHEBI:30864"/>
        <dbReference type="ChEBI" id="CHEBI:132124"/>
        <dbReference type="EC" id="1.3.5.2"/>
    </reaction>
</comment>
<comment type="cofactor">
    <cofactor evidence="1">
        <name>FMN</name>
        <dbReference type="ChEBI" id="CHEBI:58210"/>
    </cofactor>
    <text evidence="1">Binds 1 FMN per subunit.</text>
</comment>
<comment type="pathway">
    <text evidence="1">Pyrimidine metabolism; UMP biosynthesis via de novo pathway; orotate from (S)-dihydroorotate (quinone route): step 1/1.</text>
</comment>
<comment type="subunit">
    <text evidence="1">Monomer.</text>
</comment>
<comment type="subcellular location">
    <subcellularLocation>
        <location evidence="1">Cell membrane</location>
        <topology evidence="1">Peripheral membrane protein</topology>
    </subcellularLocation>
</comment>
<comment type="similarity">
    <text evidence="1">Belongs to the dihydroorotate dehydrogenase family. Type 2 subfamily.</text>
</comment>
<keyword id="KW-1003">Cell membrane</keyword>
<keyword id="KW-0285">Flavoprotein</keyword>
<keyword id="KW-0288">FMN</keyword>
<keyword id="KW-0472">Membrane</keyword>
<keyword id="KW-0560">Oxidoreductase</keyword>
<keyword id="KW-0665">Pyrimidine biosynthesis</keyword>
<organism>
    <name type="scientific">Aliivibrio salmonicida (strain LFI1238)</name>
    <name type="common">Vibrio salmonicida (strain LFI1238)</name>
    <dbReference type="NCBI Taxonomy" id="316275"/>
    <lineage>
        <taxon>Bacteria</taxon>
        <taxon>Pseudomonadati</taxon>
        <taxon>Pseudomonadota</taxon>
        <taxon>Gammaproteobacteria</taxon>
        <taxon>Vibrionales</taxon>
        <taxon>Vibrionaceae</taxon>
        <taxon>Aliivibrio</taxon>
    </lineage>
</organism>